<accession>A1RGQ6</accession>
<dbReference type="EC" id="1.17.1.8" evidence="1"/>
<dbReference type="EMBL" id="CP000503">
    <property type="protein sequence ID" value="ABM23851.1"/>
    <property type="molecule type" value="Genomic_DNA"/>
</dbReference>
<dbReference type="RefSeq" id="WP_011788377.1">
    <property type="nucleotide sequence ID" value="NC_008750.1"/>
</dbReference>
<dbReference type="SMR" id="A1RGQ6"/>
<dbReference type="KEGG" id="shw:Sputw3181_1001"/>
<dbReference type="HOGENOM" id="CLU_047479_2_1_6"/>
<dbReference type="UniPathway" id="UPA00034">
    <property type="reaction ID" value="UER00018"/>
</dbReference>
<dbReference type="Proteomes" id="UP000002597">
    <property type="component" value="Chromosome"/>
</dbReference>
<dbReference type="GO" id="GO:0005829">
    <property type="term" value="C:cytosol"/>
    <property type="evidence" value="ECO:0007669"/>
    <property type="project" value="TreeGrafter"/>
</dbReference>
<dbReference type="GO" id="GO:0008839">
    <property type="term" value="F:4-hydroxy-tetrahydrodipicolinate reductase"/>
    <property type="evidence" value="ECO:0007669"/>
    <property type="project" value="UniProtKB-EC"/>
</dbReference>
<dbReference type="GO" id="GO:0051287">
    <property type="term" value="F:NAD binding"/>
    <property type="evidence" value="ECO:0007669"/>
    <property type="project" value="UniProtKB-UniRule"/>
</dbReference>
<dbReference type="GO" id="GO:0050661">
    <property type="term" value="F:NADP binding"/>
    <property type="evidence" value="ECO:0007669"/>
    <property type="project" value="UniProtKB-UniRule"/>
</dbReference>
<dbReference type="GO" id="GO:0016726">
    <property type="term" value="F:oxidoreductase activity, acting on CH or CH2 groups, NAD or NADP as acceptor"/>
    <property type="evidence" value="ECO:0007669"/>
    <property type="project" value="UniProtKB-UniRule"/>
</dbReference>
<dbReference type="GO" id="GO:0019877">
    <property type="term" value="P:diaminopimelate biosynthetic process"/>
    <property type="evidence" value="ECO:0007669"/>
    <property type="project" value="UniProtKB-UniRule"/>
</dbReference>
<dbReference type="GO" id="GO:0009089">
    <property type="term" value="P:lysine biosynthetic process via diaminopimelate"/>
    <property type="evidence" value="ECO:0007669"/>
    <property type="project" value="UniProtKB-UniRule"/>
</dbReference>
<dbReference type="CDD" id="cd02274">
    <property type="entry name" value="DHDPR_N"/>
    <property type="match status" value="1"/>
</dbReference>
<dbReference type="FunFam" id="3.30.360.10:FF:000004">
    <property type="entry name" value="4-hydroxy-tetrahydrodipicolinate reductase"/>
    <property type="match status" value="1"/>
</dbReference>
<dbReference type="FunFam" id="3.40.50.720:FF:000048">
    <property type="entry name" value="4-hydroxy-tetrahydrodipicolinate reductase"/>
    <property type="match status" value="1"/>
</dbReference>
<dbReference type="Gene3D" id="3.30.360.10">
    <property type="entry name" value="Dihydrodipicolinate Reductase, domain 2"/>
    <property type="match status" value="1"/>
</dbReference>
<dbReference type="Gene3D" id="3.40.50.720">
    <property type="entry name" value="NAD(P)-binding Rossmann-like Domain"/>
    <property type="match status" value="1"/>
</dbReference>
<dbReference type="HAMAP" id="MF_00102">
    <property type="entry name" value="DapB"/>
    <property type="match status" value="1"/>
</dbReference>
<dbReference type="InterPro" id="IPR022663">
    <property type="entry name" value="DapB_C"/>
</dbReference>
<dbReference type="InterPro" id="IPR000846">
    <property type="entry name" value="DapB_N"/>
</dbReference>
<dbReference type="InterPro" id="IPR022664">
    <property type="entry name" value="DapB_N_CS"/>
</dbReference>
<dbReference type="InterPro" id="IPR023940">
    <property type="entry name" value="DHDPR_bac"/>
</dbReference>
<dbReference type="InterPro" id="IPR036291">
    <property type="entry name" value="NAD(P)-bd_dom_sf"/>
</dbReference>
<dbReference type="NCBIfam" id="TIGR00036">
    <property type="entry name" value="dapB"/>
    <property type="match status" value="1"/>
</dbReference>
<dbReference type="PANTHER" id="PTHR20836:SF0">
    <property type="entry name" value="4-HYDROXY-TETRAHYDRODIPICOLINATE REDUCTASE 1, CHLOROPLASTIC-RELATED"/>
    <property type="match status" value="1"/>
</dbReference>
<dbReference type="PANTHER" id="PTHR20836">
    <property type="entry name" value="DIHYDRODIPICOLINATE REDUCTASE"/>
    <property type="match status" value="1"/>
</dbReference>
<dbReference type="Pfam" id="PF05173">
    <property type="entry name" value="DapB_C"/>
    <property type="match status" value="1"/>
</dbReference>
<dbReference type="Pfam" id="PF01113">
    <property type="entry name" value="DapB_N"/>
    <property type="match status" value="1"/>
</dbReference>
<dbReference type="PIRSF" id="PIRSF000161">
    <property type="entry name" value="DHPR"/>
    <property type="match status" value="1"/>
</dbReference>
<dbReference type="SUPFAM" id="SSF55347">
    <property type="entry name" value="Glyceraldehyde-3-phosphate dehydrogenase-like, C-terminal domain"/>
    <property type="match status" value="1"/>
</dbReference>
<dbReference type="SUPFAM" id="SSF51735">
    <property type="entry name" value="NAD(P)-binding Rossmann-fold domains"/>
    <property type="match status" value="1"/>
</dbReference>
<dbReference type="PROSITE" id="PS01298">
    <property type="entry name" value="DAPB"/>
    <property type="match status" value="1"/>
</dbReference>
<keyword id="KW-0028">Amino-acid biosynthesis</keyword>
<keyword id="KW-0963">Cytoplasm</keyword>
<keyword id="KW-0220">Diaminopimelate biosynthesis</keyword>
<keyword id="KW-0457">Lysine biosynthesis</keyword>
<keyword id="KW-0520">NAD</keyword>
<keyword id="KW-0521">NADP</keyword>
<keyword id="KW-0560">Oxidoreductase</keyword>
<organism>
    <name type="scientific">Shewanella sp. (strain W3-18-1)</name>
    <dbReference type="NCBI Taxonomy" id="351745"/>
    <lineage>
        <taxon>Bacteria</taxon>
        <taxon>Pseudomonadati</taxon>
        <taxon>Pseudomonadota</taxon>
        <taxon>Gammaproteobacteria</taxon>
        <taxon>Alteromonadales</taxon>
        <taxon>Shewanellaceae</taxon>
        <taxon>Shewanella</taxon>
    </lineage>
</organism>
<comment type="function">
    <text evidence="1">Catalyzes the conversion of 4-hydroxy-tetrahydrodipicolinate (HTPA) to tetrahydrodipicolinate.</text>
</comment>
<comment type="catalytic activity">
    <reaction evidence="1">
        <text>(S)-2,3,4,5-tetrahydrodipicolinate + NAD(+) + H2O = (2S,4S)-4-hydroxy-2,3,4,5-tetrahydrodipicolinate + NADH + H(+)</text>
        <dbReference type="Rhea" id="RHEA:35323"/>
        <dbReference type="ChEBI" id="CHEBI:15377"/>
        <dbReference type="ChEBI" id="CHEBI:15378"/>
        <dbReference type="ChEBI" id="CHEBI:16845"/>
        <dbReference type="ChEBI" id="CHEBI:57540"/>
        <dbReference type="ChEBI" id="CHEBI:57945"/>
        <dbReference type="ChEBI" id="CHEBI:67139"/>
        <dbReference type="EC" id="1.17.1.8"/>
    </reaction>
</comment>
<comment type="catalytic activity">
    <reaction evidence="1">
        <text>(S)-2,3,4,5-tetrahydrodipicolinate + NADP(+) + H2O = (2S,4S)-4-hydroxy-2,3,4,5-tetrahydrodipicolinate + NADPH + H(+)</text>
        <dbReference type="Rhea" id="RHEA:35331"/>
        <dbReference type="ChEBI" id="CHEBI:15377"/>
        <dbReference type="ChEBI" id="CHEBI:15378"/>
        <dbReference type="ChEBI" id="CHEBI:16845"/>
        <dbReference type="ChEBI" id="CHEBI:57783"/>
        <dbReference type="ChEBI" id="CHEBI:58349"/>
        <dbReference type="ChEBI" id="CHEBI:67139"/>
        <dbReference type="EC" id="1.17.1.8"/>
    </reaction>
</comment>
<comment type="pathway">
    <text evidence="1">Amino-acid biosynthesis; L-lysine biosynthesis via DAP pathway; (S)-tetrahydrodipicolinate from L-aspartate: step 4/4.</text>
</comment>
<comment type="subcellular location">
    <subcellularLocation>
        <location evidence="1">Cytoplasm</location>
    </subcellularLocation>
</comment>
<comment type="similarity">
    <text evidence="1">Belongs to the DapB family.</text>
</comment>
<comment type="caution">
    <text evidence="2">Was originally thought to be a dihydrodipicolinate reductase (DHDPR), catalyzing the conversion of dihydrodipicolinate to tetrahydrodipicolinate. However, it was shown in E.coli that the substrate of the enzymatic reaction is not dihydrodipicolinate (DHDP) but in fact (2S,4S)-4-hydroxy-2,3,4,5-tetrahydrodipicolinic acid (HTPA), the product released by the DapA-catalyzed reaction.</text>
</comment>
<evidence type="ECO:0000255" key="1">
    <source>
        <dbReference type="HAMAP-Rule" id="MF_00102"/>
    </source>
</evidence>
<evidence type="ECO:0000305" key="2"/>
<protein>
    <recommendedName>
        <fullName evidence="1">4-hydroxy-tetrahydrodipicolinate reductase</fullName>
        <shortName evidence="1">HTPA reductase</shortName>
        <ecNumber evidence="1">1.17.1.8</ecNumber>
    </recommendedName>
</protein>
<feature type="chain" id="PRO_1000008641" description="4-hydroxy-tetrahydrodipicolinate reductase">
    <location>
        <begin position="1"/>
        <end position="270"/>
    </location>
</feature>
<feature type="active site" description="Proton donor/acceptor" evidence="1">
    <location>
        <position position="158"/>
    </location>
</feature>
<feature type="active site" description="Proton donor" evidence="1">
    <location>
        <position position="162"/>
    </location>
</feature>
<feature type="binding site" evidence="1">
    <location>
        <begin position="11"/>
        <end position="16"/>
    </location>
    <ligand>
        <name>NAD(+)</name>
        <dbReference type="ChEBI" id="CHEBI:57540"/>
    </ligand>
</feature>
<feature type="binding site" evidence="1">
    <location>
        <position position="37"/>
    </location>
    <ligand>
        <name>NAD(+)</name>
        <dbReference type="ChEBI" id="CHEBI:57540"/>
    </ligand>
</feature>
<feature type="binding site" evidence="1">
    <location>
        <position position="38"/>
    </location>
    <ligand>
        <name>NADP(+)</name>
        <dbReference type="ChEBI" id="CHEBI:58349"/>
    </ligand>
</feature>
<feature type="binding site" evidence="1">
    <location>
        <begin position="101"/>
        <end position="103"/>
    </location>
    <ligand>
        <name>NAD(+)</name>
        <dbReference type="ChEBI" id="CHEBI:57540"/>
    </ligand>
</feature>
<feature type="binding site" evidence="1">
    <location>
        <begin position="125"/>
        <end position="128"/>
    </location>
    <ligand>
        <name>NAD(+)</name>
        <dbReference type="ChEBI" id="CHEBI:57540"/>
    </ligand>
</feature>
<feature type="binding site" evidence="1">
    <location>
        <position position="159"/>
    </location>
    <ligand>
        <name>(S)-2,3,4,5-tetrahydrodipicolinate</name>
        <dbReference type="ChEBI" id="CHEBI:16845"/>
    </ligand>
</feature>
<feature type="binding site" evidence="1">
    <location>
        <begin position="168"/>
        <end position="169"/>
    </location>
    <ligand>
        <name>(S)-2,3,4,5-tetrahydrodipicolinate</name>
        <dbReference type="ChEBI" id="CHEBI:16845"/>
    </ligand>
</feature>
<proteinExistence type="inferred from homology"/>
<name>DAPB_SHESW</name>
<reference key="1">
    <citation type="submission" date="2006-12" db="EMBL/GenBank/DDBJ databases">
        <title>Complete sequence of Shewanella sp. W3-18-1.</title>
        <authorList>
            <consortium name="US DOE Joint Genome Institute"/>
            <person name="Copeland A."/>
            <person name="Lucas S."/>
            <person name="Lapidus A."/>
            <person name="Barry K."/>
            <person name="Detter J.C."/>
            <person name="Glavina del Rio T."/>
            <person name="Hammon N."/>
            <person name="Israni S."/>
            <person name="Dalin E."/>
            <person name="Tice H."/>
            <person name="Pitluck S."/>
            <person name="Chain P."/>
            <person name="Malfatti S."/>
            <person name="Shin M."/>
            <person name="Vergez L."/>
            <person name="Schmutz J."/>
            <person name="Larimer F."/>
            <person name="Land M."/>
            <person name="Hauser L."/>
            <person name="Kyrpides N."/>
            <person name="Lykidis A."/>
            <person name="Tiedje J."/>
            <person name="Richardson P."/>
        </authorList>
    </citation>
    <scope>NUCLEOTIDE SEQUENCE [LARGE SCALE GENOMIC DNA]</scope>
    <source>
        <strain>W3-18-1</strain>
    </source>
</reference>
<sequence length="270" mass="29202">MGGQVRVAIVGAGGRMGRTLIEAAYHQEHILLGAAIERAGSSLVGIDAGELAGVGKLNVIIMDSLDYATDDFDVLIDFTAPDASIVHLDWCVRHKKAMVIGTTGFNQAQKIQINAFAEQTPVVMAPNMSVGVNLMWKLLELAAEVMGDYTDIEIIEGHHRHKKDAPSGTALKMGEVIAKTLGRDLEKCAVYGREGITGERDRETIGFATIRAGDLVGEHTAMFADIGERLEITHKASSRMTFANGAMRAARWVVEQKPGLYDMQQVLGLN</sequence>
<gene>
    <name evidence="1" type="primary">dapB</name>
    <name type="ordered locus">Sputw3181_1001</name>
</gene>